<comment type="function">
    <text evidence="1">Catalyzes the condensation of ATP and 5-phosphoribose 1-diphosphate to form N'-(5'-phosphoribosyl)-ATP (PR-ATP). Has a crucial role in the pathway because the rate of histidine biosynthesis seems to be controlled primarily by regulation of HisG enzymatic activity.</text>
</comment>
<comment type="catalytic activity">
    <reaction evidence="1">
        <text>1-(5-phospho-beta-D-ribosyl)-ATP + diphosphate = 5-phospho-alpha-D-ribose 1-diphosphate + ATP</text>
        <dbReference type="Rhea" id="RHEA:18473"/>
        <dbReference type="ChEBI" id="CHEBI:30616"/>
        <dbReference type="ChEBI" id="CHEBI:33019"/>
        <dbReference type="ChEBI" id="CHEBI:58017"/>
        <dbReference type="ChEBI" id="CHEBI:73183"/>
        <dbReference type="EC" id="2.4.2.17"/>
    </reaction>
</comment>
<comment type="pathway">
    <text evidence="1">Amino-acid biosynthesis; L-histidine biosynthesis; L-histidine from 5-phospho-alpha-D-ribose 1-diphosphate: step 1/9.</text>
</comment>
<comment type="subunit">
    <text evidence="1">Heteromultimer composed of HisG and HisZ subunits.</text>
</comment>
<comment type="subcellular location">
    <subcellularLocation>
        <location evidence="1">Cytoplasm</location>
    </subcellularLocation>
</comment>
<comment type="domain">
    <text>Lacks the C-terminal regulatory region which is replaced by HisZ.</text>
</comment>
<comment type="similarity">
    <text evidence="1">Belongs to the ATP phosphoribosyltransferase family. Short subfamily.</text>
</comment>
<organism>
    <name type="scientific">Thiobacillus denitrificans (strain ATCC 25259 / T1)</name>
    <dbReference type="NCBI Taxonomy" id="292415"/>
    <lineage>
        <taxon>Bacteria</taxon>
        <taxon>Pseudomonadati</taxon>
        <taxon>Pseudomonadota</taxon>
        <taxon>Betaproteobacteria</taxon>
        <taxon>Nitrosomonadales</taxon>
        <taxon>Thiobacillaceae</taxon>
        <taxon>Thiobacillus</taxon>
    </lineage>
</organism>
<sequence length="216" mass="22938">MSNTGITLALSKGRIFDETLPLLAAAGITPAESPESSRKLIIGTNRDDVRLIIVRASDVPTYVQYGAADLGIAGKDVLNEHGGRGLYQPLDLQIAKCRMMVAVREGYDYAGTVKQGARIRVATKYVNAARDHFASKGVHIDLIKLYGSMELAPLVGLSDVIVDLVSTGGTLKANGLAAVEHICDISSRLVVNQAALKLKRSVIQPVVDAFAAAVAR</sequence>
<proteinExistence type="inferred from homology"/>
<gene>
    <name evidence="1" type="primary">hisG</name>
    <name type="ordered locus">Tbd_1890</name>
</gene>
<accession>Q3SHP3</accession>
<evidence type="ECO:0000255" key="1">
    <source>
        <dbReference type="HAMAP-Rule" id="MF_01018"/>
    </source>
</evidence>
<feature type="chain" id="PRO_0000229337" description="ATP phosphoribosyltransferase">
    <location>
        <begin position="1"/>
        <end position="216"/>
    </location>
</feature>
<dbReference type="EC" id="2.4.2.17" evidence="1"/>
<dbReference type="EMBL" id="CP000116">
    <property type="protein sequence ID" value="AAZ97843.1"/>
    <property type="molecule type" value="Genomic_DNA"/>
</dbReference>
<dbReference type="RefSeq" id="WP_011312402.1">
    <property type="nucleotide sequence ID" value="NC_007404.1"/>
</dbReference>
<dbReference type="SMR" id="Q3SHP3"/>
<dbReference type="STRING" id="292415.Tbd_1890"/>
<dbReference type="KEGG" id="tbd:Tbd_1890"/>
<dbReference type="eggNOG" id="COG0040">
    <property type="taxonomic scope" value="Bacteria"/>
</dbReference>
<dbReference type="HOGENOM" id="CLU_038115_2_0_4"/>
<dbReference type="OrthoDB" id="9801867at2"/>
<dbReference type="UniPathway" id="UPA00031">
    <property type="reaction ID" value="UER00006"/>
</dbReference>
<dbReference type="Proteomes" id="UP000008291">
    <property type="component" value="Chromosome"/>
</dbReference>
<dbReference type="GO" id="GO:0005737">
    <property type="term" value="C:cytoplasm"/>
    <property type="evidence" value="ECO:0007669"/>
    <property type="project" value="UniProtKB-SubCell"/>
</dbReference>
<dbReference type="GO" id="GO:0005524">
    <property type="term" value="F:ATP binding"/>
    <property type="evidence" value="ECO:0007669"/>
    <property type="project" value="UniProtKB-KW"/>
</dbReference>
<dbReference type="GO" id="GO:0003879">
    <property type="term" value="F:ATP phosphoribosyltransferase activity"/>
    <property type="evidence" value="ECO:0007669"/>
    <property type="project" value="UniProtKB-UniRule"/>
</dbReference>
<dbReference type="GO" id="GO:0000105">
    <property type="term" value="P:L-histidine biosynthetic process"/>
    <property type="evidence" value="ECO:0007669"/>
    <property type="project" value="UniProtKB-UniRule"/>
</dbReference>
<dbReference type="CDD" id="cd13595">
    <property type="entry name" value="PBP2_HisGs"/>
    <property type="match status" value="1"/>
</dbReference>
<dbReference type="FunFam" id="3.40.190.10:FF:000011">
    <property type="entry name" value="ATP phosphoribosyltransferase"/>
    <property type="match status" value="1"/>
</dbReference>
<dbReference type="Gene3D" id="3.40.190.10">
    <property type="entry name" value="Periplasmic binding protein-like II"/>
    <property type="match status" value="2"/>
</dbReference>
<dbReference type="HAMAP" id="MF_01018">
    <property type="entry name" value="HisG_Short"/>
    <property type="match status" value="1"/>
</dbReference>
<dbReference type="InterPro" id="IPR013820">
    <property type="entry name" value="ATP_PRibTrfase_cat"/>
</dbReference>
<dbReference type="InterPro" id="IPR018198">
    <property type="entry name" value="ATP_PRibTrfase_CS"/>
</dbReference>
<dbReference type="InterPro" id="IPR001348">
    <property type="entry name" value="ATP_PRibTrfase_HisG"/>
</dbReference>
<dbReference type="InterPro" id="IPR024893">
    <property type="entry name" value="ATP_PRibTrfase_HisG_short"/>
</dbReference>
<dbReference type="NCBIfam" id="TIGR00070">
    <property type="entry name" value="hisG"/>
    <property type="match status" value="1"/>
</dbReference>
<dbReference type="PANTHER" id="PTHR21403:SF8">
    <property type="entry name" value="ATP PHOSPHORIBOSYLTRANSFERASE"/>
    <property type="match status" value="1"/>
</dbReference>
<dbReference type="PANTHER" id="PTHR21403">
    <property type="entry name" value="ATP PHOSPHORIBOSYLTRANSFERASE ATP-PRTASE"/>
    <property type="match status" value="1"/>
</dbReference>
<dbReference type="Pfam" id="PF01634">
    <property type="entry name" value="HisG"/>
    <property type="match status" value="1"/>
</dbReference>
<dbReference type="SUPFAM" id="SSF53850">
    <property type="entry name" value="Periplasmic binding protein-like II"/>
    <property type="match status" value="1"/>
</dbReference>
<dbReference type="PROSITE" id="PS01316">
    <property type="entry name" value="ATP_P_PHORIBOSYLTR"/>
    <property type="match status" value="1"/>
</dbReference>
<name>HIS1_THIDA</name>
<protein>
    <recommendedName>
        <fullName evidence="1">ATP phosphoribosyltransferase</fullName>
        <shortName evidence="1">ATP-PRT</shortName>
        <shortName evidence="1">ATP-PRTase</shortName>
        <ecNumber evidence="1">2.4.2.17</ecNumber>
    </recommendedName>
</protein>
<reference key="1">
    <citation type="journal article" date="2006" name="J. Bacteriol.">
        <title>The genome sequence of the obligately chemolithoautotrophic, facultatively anaerobic bacterium Thiobacillus denitrificans.</title>
        <authorList>
            <person name="Beller H.R."/>
            <person name="Chain P.S."/>
            <person name="Letain T.E."/>
            <person name="Chakicherla A."/>
            <person name="Larimer F.W."/>
            <person name="Richardson P.M."/>
            <person name="Coleman M.A."/>
            <person name="Wood A.P."/>
            <person name="Kelly D.P."/>
        </authorList>
    </citation>
    <scope>NUCLEOTIDE SEQUENCE [LARGE SCALE GENOMIC DNA]</scope>
    <source>
        <strain>ATCC 25259 / T1</strain>
    </source>
</reference>
<keyword id="KW-0028">Amino-acid biosynthesis</keyword>
<keyword id="KW-0067">ATP-binding</keyword>
<keyword id="KW-0963">Cytoplasm</keyword>
<keyword id="KW-0328">Glycosyltransferase</keyword>
<keyword id="KW-0368">Histidine biosynthesis</keyword>
<keyword id="KW-0547">Nucleotide-binding</keyword>
<keyword id="KW-1185">Reference proteome</keyword>
<keyword id="KW-0808">Transferase</keyword>